<keyword id="KW-0030">Aminoacyl-tRNA synthetase</keyword>
<keyword id="KW-0067">ATP-binding</keyword>
<keyword id="KW-0963">Cytoplasm</keyword>
<keyword id="KW-0436">Ligase</keyword>
<keyword id="KW-0547">Nucleotide-binding</keyword>
<keyword id="KW-0648">Protein biosynthesis</keyword>
<feature type="chain" id="PRO_1000091315" description="Leucine--tRNA ligase">
    <location>
        <begin position="1"/>
        <end position="860"/>
    </location>
</feature>
<feature type="short sequence motif" description="'HIGH' region">
    <location>
        <begin position="42"/>
        <end position="52"/>
    </location>
</feature>
<feature type="short sequence motif" description="'KMSKS' region">
    <location>
        <begin position="619"/>
        <end position="623"/>
    </location>
</feature>
<feature type="binding site" evidence="1">
    <location>
        <position position="622"/>
    </location>
    <ligand>
        <name>ATP</name>
        <dbReference type="ChEBI" id="CHEBI:30616"/>
    </ligand>
</feature>
<evidence type="ECO:0000255" key="1">
    <source>
        <dbReference type="HAMAP-Rule" id="MF_00049"/>
    </source>
</evidence>
<reference key="1">
    <citation type="journal article" date="2008" name="DNA Res.">
        <title>Complete genome sequence and comparative analysis of the wild-type commensal Escherichia coli strain SE11 isolated from a healthy adult.</title>
        <authorList>
            <person name="Oshima K."/>
            <person name="Toh H."/>
            <person name="Ogura Y."/>
            <person name="Sasamoto H."/>
            <person name="Morita H."/>
            <person name="Park S.-H."/>
            <person name="Ooka T."/>
            <person name="Iyoda S."/>
            <person name="Taylor T.D."/>
            <person name="Hayashi T."/>
            <person name="Itoh K."/>
            <person name="Hattori M."/>
        </authorList>
    </citation>
    <scope>NUCLEOTIDE SEQUENCE [LARGE SCALE GENOMIC DNA]</scope>
    <source>
        <strain>SE11</strain>
    </source>
</reference>
<comment type="catalytic activity">
    <reaction evidence="1">
        <text>tRNA(Leu) + L-leucine + ATP = L-leucyl-tRNA(Leu) + AMP + diphosphate</text>
        <dbReference type="Rhea" id="RHEA:11688"/>
        <dbReference type="Rhea" id="RHEA-COMP:9613"/>
        <dbReference type="Rhea" id="RHEA-COMP:9622"/>
        <dbReference type="ChEBI" id="CHEBI:30616"/>
        <dbReference type="ChEBI" id="CHEBI:33019"/>
        <dbReference type="ChEBI" id="CHEBI:57427"/>
        <dbReference type="ChEBI" id="CHEBI:78442"/>
        <dbReference type="ChEBI" id="CHEBI:78494"/>
        <dbReference type="ChEBI" id="CHEBI:456215"/>
        <dbReference type="EC" id="6.1.1.4"/>
    </reaction>
</comment>
<comment type="subcellular location">
    <subcellularLocation>
        <location evidence="1">Cytoplasm</location>
    </subcellularLocation>
</comment>
<comment type="similarity">
    <text evidence="1">Belongs to the class-I aminoacyl-tRNA synthetase family.</text>
</comment>
<accession>B6I153</accession>
<organism>
    <name type="scientific">Escherichia coli (strain SE11)</name>
    <dbReference type="NCBI Taxonomy" id="409438"/>
    <lineage>
        <taxon>Bacteria</taxon>
        <taxon>Pseudomonadati</taxon>
        <taxon>Pseudomonadota</taxon>
        <taxon>Gammaproteobacteria</taxon>
        <taxon>Enterobacterales</taxon>
        <taxon>Enterobacteriaceae</taxon>
        <taxon>Escherichia</taxon>
    </lineage>
</organism>
<gene>
    <name evidence="1" type="primary">leuS</name>
    <name type="ordered locus">ECSE_0711</name>
</gene>
<sequence>MQEQYRPEEIESKVQLHWDEKRTFEVTEDESKEKYYCLSMLPYPSGRLHMGHVRNYTIGDVIARYQRMLGKNVLQPIGWDAFGLPAEGAAVKNNTAPAPWTYDNIAYMKNQLKMLGFGYDWSRELATCTPEYYRWEQKFFTELYKKGLVYKKTSAVNWCPNDQTVLANEQVIDGCCWRCDTKVERKEIPQWFIKITAYADELLNDLDKLDHWPDTVKTMQRNWIGRSEGVEITFNVNDYDNTLTVYTTRPDTFMGCTYLAVAAGHPLAQKAAENNPELAAFIDECRNTKVAEAEMATMEKKGVDTGFKAVHPLTGEEIPVWAANFVLMEYGTGAVMAVPGHDQRDYEFASKYGLNIKPVILAADGSEPDLSQQALTEKGVLFNSGEFNGLDHEAAFNAIADKLTAMGVGERKVNYRLRDWGVSRQRYWGAPIPMVTLEDGTVMPTPDDQLPVILPEDVVMDGITSPIKADPEWAKTTVNGMPALRETDTFDTFMESSWYYARYTCPQYKEGMLDSEAANYWLPVDIYIGGIEHAIMHLLYFRFFHKLMRDAGMVNSDEPAKQLLCQGMVLADAFYYVGENGERNWVSPVDAIVERDEKGRIVKAKDAAGHELVYTGMSKMSKSKNNGIDPQVMVERYGADTVRLFMMFASPADMTLEWQESGVEGANRFLKRVWKLVYEHTAKGDVAALNVDALTEDQKALRRDVHKTIAKVTDDIGRRQTFNTAIAAIMELMNKLAKAPTDGEQDRALMQEALLAVVRMLNPFTPHICFTLWQELKGEGDIDNAPWPVADEKAMVEDSTLVVVQVNGKVRAKITVPVDATEEQVRERAGQEHLVAKYLDGVTVRKVIYVPGKLLNLVVG</sequence>
<proteinExistence type="inferred from homology"/>
<protein>
    <recommendedName>
        <fullName evidence="1">Leucine--tRNA ligase</fullName>
        <ecNumber evidence="1">6.1.1.4</ecNumber>
    </recommendedName>
    <alternativeName>
        <fullName evidence="1">Leucyl-tRNA synthetase</fullName>
        <shortName evidence="1">LeuRS</shortName>
    </alternativeName>
</protein>
<name>SYL_ECOSE</name>
<dbReference type="EC" id="6.1.1.4" evidence="1"/>
<dbReference type="EMBL" id="AP009240">
    <property type="protein sequence ID" value="BAG76235.1"/>
    <property type="molecule type" value="Genomic_DNA"/>
</dbReference>
<dbReference type="RefSeq" id="WP_001297565.1">
    <property type="nucleotide sequence ID" value="NC_011415.1"/>
</dbReference>
<dbReference type="SMR" id="B6I153"/>
<dbReference type="KEGG" id="ecy:ECSE_0711"/>
<dbReference type="HOGENOM" id="CLU_004427_0_0_6"/>
<dbReference type="Proteomes" id="UP000008199">
    <property type="component" value="Chromosome"/>
</dbReference>
<dbReference type="GO" id="GO:0005829">
    <property type="term" value="C:cytosol"/>
    <property type="evidence" value="ECO:0007669"/>
    <property type="project" value="TreeGrafter"/>
</dbReference>
<dbReference type="GO" id="GO:0002161">
    <property type="term" value="F:aminoacyl-tRNA deacylase activity"/>
    <property type="evidence" value="ECO:0007669"/>
    <property type="project" value="InterPro"/>
</dbReference>
<dbReference type="GO" id="GO:0005524">
    <property type="term" value="F:ATP binding"/>
    <property type="evidence" value="ECO:0007669"/>
    <property type="project" value="UniProtKB-UniRule"/>
</dbReference>
<dbReference type="GO" id="GO:0004823">
    <property type="term" value="F:leucine-tRNA ligase activity"/>
    <property type="evidence" value="ECO:0007669"/>
    <property type="project" value="UniProtKB-UniRule"/>
</dbReference>
<dbReference type="GO" id="GO:0006429">
    <property type="term" value="P:leucyl-tRNA aminoacylation"/>
    <property type="evidence" value="ECO:0007669"/>
    <property type="project" value="UniProtKB-UniRule"/>
</dbReference>
<dbReference type="CDD" id="cd07958">
    <property type="entry name" value="Anticodon_Ia_Leu_BEm"/>
    <property type="match status" value="1"/>
</dbReference>
<dbReference type="CDD" id="cd00812">
    <property type="entry name" value="LeuRS_core"/>
    <property type="match status" value="1"/>
</dbReference>
<dbReference type="FunFam" id="1.10.730.10:FF:000002">
    <property type="entry name" value="Leucine--tRNA ligase"/>
    <property type="match status" value="2"/>
</dbReference>
<dbReference type="FunFam" id="2.20.28.290:FF:000001">
    <property type="entry name" value="Leucine--tRNA ligase"/>
    <property type="match status" value="1"/>
</dbReference>
<dbReference type="FunFam" id="3.10.20.590:FF:000001">
    <property type="entry name" value="Leucine--tRNA ligase"/>
    <property type="match status" value="1"/>
</dbReference>
<dbReference type="FunFam" id="3.40.50.620:FF:000003">
    <property type="entry name" value="Leucine--tRNA ligase"/>
    <property type="match status" value="1"/>
</dbReference>
<dbReference type="FunFam" id="3.40.50.620:FF:000124">
    <property type="entry name" value="Leucine--tRNA ligase"/>
    <property type="match status" value="1"/>
</dbReference>
<dbReference type="FunFam" id="3.90.740.10:FF:000012">
    <property type="entry name" value="Leucine--tRNA ligase"/>
    <property type="match status" value="1"/>
</dbReference>
<dbReference type="Gene3D" id="2.20.28.290">
    <property type="match status" value="1"/>
</dbReference>
<dbReference type="Gene3D" id="3.10.20.590">
    <property type="match status" value="1"/>
</dbReference>
<dbReference type="Gene3D" id="3.40.50.620">
    <property type="entry name" value="HUPs"/>
    <property type="match status" value="2"/>
</dbReference>
<dbReference type="Gene3D" id="1.10.730.10">
    <property type="entry name" value="Isoleucyl-tRNA Synthetase, Domain 1"/>
    <property type="match status" value="1"/>
</dbReference>
<dbReference type="HAMAP" id="MF_00049_B">
    <property type="entry name" value="Leu_tRNA_synth_B"/>
    <property type="match status" value="1"/>
</dbReference>
<dbReference type="InterPro" id="IPR001412">
    <property type="entry name" value="aa-tRNA-synth_I_CS"/>
</dbReference>
<dbReference type="InterPro" id="IPR002300">
    <property type="entry name" value="aa-tRNA-synth_Ia"/>
</dbReference>
<dbReference type="InterPro" id="IPR002302">
    <property type="entry name" value="Leu-tRNA-ligase"/>
</dbReference>
<dbReference type="InterPro" id="IPR025709">
    <property type="entry name" value="Leu_tRNA-synth_edit"/>
</dbReference>
<dbReference type="InterPro" id="IPR013155">
    <property type="entry name" value="M/V/L/I-tRNA-synth_anticd-bd"/>
</dbReference>
<dbReference type="InterPro" id="IPR015413">
    <property type="entry name" value="Methionyl/Leucyl_tRNA_Synth"/>
</dbReference>
<dbReference type="InterPro" id="IPR014729">
    <property type="entry name" value="Rossmann-like_a/b/a_fold"/>
</dbReference>
<dbReference type="InterPro" id="IPR009080">
    <property type="entry name" value="tRNAsynth_Ia_anticodon-bd"/>
</dbReference>
<dbReference type="InterPro" id="IPR009008">
    <property type="entry name" value="Val/Leu/Ile-tRNA-synth_edit"/>
</dbReference>
<dbReference type="NCBIfam" id="TIGR00396">
    <property type="entry name" value="leuS_bact"/>
    <property type="match status" value="1"/>
</dbReference>
<dbReference type="PANTHER" id="PTHR43740:SF2">
    <property type="entry name" value="LEUCINE--TRNA LIGASE, MITOCHONDRIAL"/>
    <property type="match status" value="1"/>
</dbReference>
<dbReference type="PANTHER" id="PTHR43740">
    <property type="entry name" value="LEUCYL-TRNA SYNTHETASE"/>
    <property type="match status" value="1"/>
</dbReference>
<dbReference type="Pfam" id="PF08264">
    <property type="entry name" value="Anticodon_1"/>
    <property type="match status" value="1"/>
</dbReference>
<dbReference type="Pfam" id="PF00133">
    <property type="entry name" value="tRNA-synt_1"/>
    <property type="match status" value="2"/>
</dbReference>
<dbReference type="Pfam" id="PF13603">
    <property type="entry name" value="tRNA-synt_1_2"/>
    <property type="match status" value="1"/>
</dbReference>
<dbReference type="Pfam" id="PF09334">
    <property type="entry name" value="tRNA-synt_1g"/>
    <property type="match status" value="1"/>
</dbReference>
<dbReference type="PRINTS" id="PR00985">
    <property type="entry name" value="TRNASYNTHLEU"/>
</dbReference>
<dbReference type="SUPFAM" id="SSF47323">
    <property type="entry name" value="Anticodon-binding domain of a subclass of class I aminoacyl-tRNA synthetases"/>
    <property type="match status" value="1"/>
</dbReference>
<dbReference type="SUPFAM" id="SSF52374">
    <property type="entry name" value="Nucleotidylyl transferase"/>
    <property type="match status" value="1"/>
</dbReference>
<dbReference type="SUPFAM" id="SSF50677">
    <property type="entry name" value="ValRS/IleRS/LeuRS editing domain"/>
    <property type="match status" value="1"/>
</dbReference>
<dbReference type="PROSITE" id="PS00178">
    <property type="entry name" value="AA_TRNA_LIGASE_I"/>
    <property type="match status" value="1"/>
</dbReference>